<protein>
    <recommendedName>
        <fullName evidence="1">Large ribosomal subunit protein bL33c</fullName>
    </recommendedName>
    <alternativeName>
        <fullName evidence="2">50S ribosomal protein L33, chloroplastic</fullName>
    </alternativeName>
</protein>
<reference key="1">
    <citation type="journal article" date="2006" name="BMC Evol. Biol.">
        <title>Phylogenetic analyses of Vitis (Vitaceae) based on complete chloroplast genome sequences: effects of taxon sampling and phylogenetic methods on resolving relationships among rosids.</title>
        <authorList>
            <person name="Jansen R.K."/>
            <person name="Kaittanis C."/>
            <person name="Lee S.-B."/>
            <person name="Saski C."/>
            <person name="Tomkins J."/>
            <person name="Alverson A.J."/>
            <person name="Daniell H."/>
        </authorList>
    </citation>
    <scope>NUCLEOTIDE SEQUENCE [LARGE SCALE GENOMIC DNA]</scope>
    <source>
        <strain>cv. Maxxa</strain>
    </source>
</reference>
<keyword id="KW-0150">Chloroplast</keyword>
<keyword id="KW-0934">Plastid</keyword>
<keyword id="KW-1185">Reference proteome</keyword>
<keyword id="KW-0687">Ribonucleoprotein</keyword>
<keyword id="KW-0689">Ribosomal protein</keyword>
<organism>
    <name type="scientific">Vitis vinifera</name>
    <name type="common">Grape</name>
    <dbReference type="NCBI Taxonomy" id="29760"/>
    <lineage>
        <taxon>Eukaryota</taxon>
        <taxon>Viridiplantae</taxon>
        <taxon>Streptophyta</taxon>
        <taxon>Embryophyta</taxon>
        <taxon>Tracheophyta</taxon>
        <taxon>Spermatophyta</taxon>
        <taxon>Magnoliopsida</taxon>
        <taxon>eudicotyledons</taxon>
        <taxon>Gunneridae</taxon>
        <taxon>Pentapetalae</taxon>
        <taxon>rosids</taxon>
        <taxon>Vitales</taxon>
        <taxon>Vitaceae</taxon>
        <taxon>Viteae</taxon>
        <taxon>Vitis</taxon>
    </lineage>
</organism>
<sequence length="66" mass="7595">MAKSKDARIRVLLECTSCVRGGVNKESTGISRYITEKNRHNTPGRLELQKFCPYCYKHTIHGEIKK</sequence>
<proteinExistence type="inferred from homology"/>
<dbReference type="EMBL" id="DQ424856">
    <property type="protein sequence ID" value="ABE47555.1"/>
    <property type="molecule type" value="Genomic_DNA"/>
</dbReference>
<dbReference type="RefSeq" id="YP_567097.1">
    <property type="nucleotide sequence ID" value="NC_007957.1"/>
</dbReference>
<dbReference type="FunCoup" id="Q0ZIZ9">
    <property type="interactions" value="37"/>
</dbReference>
<dbReference type="STRING" id="29760.Q0ZIZ9"/>
<dbReference type="GeneID" id="4025060"/>
<dbReference type="KEGG" id="vvi:4025060"/>
<dbReference type="InParanoid" id="Q0ZIZ9"/>
<dbReference type="OrthoDB" id="53059at71240"/>
<dbReference type="Proteomes" id="UP000009183">
    <property type="component" value="Chloroplast"/>
</dbReference>
<dbReference type="GO" id="GO:0009507">
    <property type="term" value="C:chloroplast"/>
    <property type="evidence" value="ECO:0007669"/>
    <property type="project" value="UniProtKB-SubCell"/>
</dbReference>
<dbReference type="GO" id="GO:1990904">
    <property type="term" value="C:ribonucleoprotein complex"/>
    <property type="evidence" value="ECO:0007669"/>
    <property type="project" value="UniProtKB-KW"/>
</dbReference>
<dbReference type="GO" id="GO:0005840">
    <property type="term" value="C:ribosome"/>
    <property type="evidence" value="ECO:0007669"/>
    <property type="project" value="UniProtKB-KW"/>
</dbReference>
<dbReference type="GO" id="GO:0003735">
    <property type="term" value="F:structural constituent of ribosome"/>
    <property type="evidence" value="ECO:0007669"/>
    <property type="project" value="InterPro"/>
</dbReference>
<dbReference type="GO" id="GO:0006412">
    <property type="term" value="P:translation"/>
    <property type="evidence" value="ECO:0007669"/>
    <property type="project" value="UniProtKB-UniRule"/>
</dbReference>
<dbReference type="Gene3D" id="2.20.28.120">
    <property type="entry name" value="Ribosomal protein L33"/>
    <property type="match status" value="1"/>
</dbReference>
<dbReference type="HAMAP" id="MF_00294">
    <property type="entry name" value="Ribosomal_bL33"/>
    <property type="match status" value="1"/>
</dbReference>
<dbReference type="InterPro" id="IPR001705">
    <property type="entry name" value="Ribosomal_bL33"/>
</dbReference>
<dbReference type="InterPro" id="IPR018264">
    <property type="entry name" value="Ribosomal_bL33_CS"/>
</dbReference>
<dbReference type="InterPro" id="IPR038584">
    <property type="entry name" value="Ribosomal_bL33_sf"/>
</dbReference>
<dbReference type="InterPro" id="IPR011332">
    <property type="entry name" value="Ribosomal_zn-bd"/>
</dbReference>
<dbReference type="NCBIfam" id="NF001764">
    <property type="entry name" value="PRK00504.1"/>
    <property type="match status" value="1"/>
</dbReference>
<dbReference type="NCBIfam" id="NF001860">
    <property type="entry name" value="PRK00595.1"/>
    <property type="match status" value="1"/>
</dbReference>
<dbReference type="NCBIfam" id="TIGR01023">
    <property type="entry name" value="rpmG_bact"/>
    <property type="match status" value="1"/>
</dbReference>
<dbReference type="PANTHER" id="PTHR43168">
    <property type="entry name" value="50S RIBOSOMAL PROTEIN L33, CHLOROPLASTIC"/>
    <property type="match status" value="1"/>
</dbReference>
<dbReference type="PANTHER" id="PTHR43168:SF2">
    <property type="entry name" value="LARGE RIBOSOMAL SUBUNIT PROTEIN BL33C"/>
    <property type="match status" value="1"/>
</dbReference>
<dbReference type="Pfam" id="PF00471">
    <property type="entry name" value="Ribosomal_L33"/>
    <property type="match status" value="1"/>
</dbReference>
<dbReference type="SUPFAM" id="SSF57829">
    <property type="entry name" value="Zn-binding ribosomal proteins"/>
    <property type="match status" value="1"/>
</dbReference>
<dbReference type="PROSITE" id="PS00582">
    <property type="entry name" value="RIBOSOMAL_L33"/>
    <property type="match status" value="1"/>
</dbReference>
<accession>Q0ZIZ9</accession>
<geneLocation type="chloroplast"/>
<comment type="subcellular location">
    <subcellularLocation>
        <location>Plastid</location>
        <location>Chloroplast</location>
    </subcellularLocation>
</comment>
<comment type="similarity">
    <text evidence="1">Belongs to the bacterial ribosomal protein bL33 family.</text>
</comment>
<gene>
    <name evidence="1" type="primary">rpl33</name>
</gene>
<feature type="chain" id="PRO_0000276521" description="Large ribosomal subunit protein bL33c">
    <location>
        <begin position="1"/>
        <end position="66"/>
    </location>
</feature>
<name>RK33_VITVI</name>
<evidence type="ECO:0000255" key="1">
    <source>
        <dbReference type="HAMAP-Rule" id="MF_00294"/>
    </source>
</evidence>
<evidence type="ECO:0000305" key="2"/>